<reference key="1">
    <citation type="submission" date="2008-08" db="EMBL/GenBank/DDBJ databases">
        <title>The complete genome sequence of Thermodesulfovibrio yellowstonii strain ATCC 51303 / DSM 11347 / YP87.</title>
        <authorList>
            <person name="Dodson R.J."/>
            <person name="Durkin A.S."/>
            <person name="Wu M."/>
            <person name="Eisen J."/>
            <person name="Sutton G."/>
        </authorList>
    </citation>
    <scope>NUCLEOTIDE SEQUENCE [LARGE SCALE GENOMIC DNA]</scope>
    <source>
        <strain>ATCC 51303 / DSM 11347 / YP87</strain>
    </source>
</reference>
<feature type="chain" id="PRO_1000124078" description="4-hydroxy-tetrahydrodipicolinate synthase">
    <location>
        <begin position="1"/>
        <end position="291"/>
    </location>
</feature>
<feature type="active site" description="Proton donor/acceptor" evidence="1">
    <location>
        <position position="132"/>
    </location>
</feature>
<feature type="active site" description="Schiff-base intermediate with substrate" evidence="1">
    <location>
        <position position="160"/>
    </location>
</feature>
<feature type="binding site" evidence="1">
    <location>
        <position position="44"/>
    </location>
    <ligand>
        <name>pyruvate</name>
        <dbReference type="ChEBI" id="CHEBI:15361"/>
    </ligand>
</feature>
<feature type="binding site" evidence="1">
    <location>
        <position position="202"/>
    </location>
    <ligand>
        <name>pyruvate</name>
        <dbReference type="ChEBI" id="CHEBI:15361"/>
    </ligand>
</feature>
<feature type="site" description="Part of a proton relay during catalysis" evidence="1">
    <location>
        <position position="43"/>
    </location>
</feature>
<feature type="site" description="Part of a proton relay during catalysis" evidence="1">
    <location>
        <position position="106"/>
    </location>
</feature>
<keyword id="KW-0028">Amino-acid biosynthesis</keyword>
<keyword id="KW-0963">Cytoplasm</keyword>
<keyword id="KW-0220">Diaminopimelate biosynthesis</keyword>
<keyword id="KW-0456">Lyase</keyword>
<keyword id="KW-0457">Lysine biosynthesis</keyword>
<keyword id="KW-1185">Reference proteome</keyword>
<keyword id="KW-0704">Schiff base</keyword>
<comment type="function">
    <text evidence="1">Catalyzes the condensation of (S)-aspartate-beta-semialdehyde [(S)-ASA] and pyruvate to 4-hydroxy-tetrahydrodipicolinate (HTPA).</text>
</comment>
<comment type="catalytic activity">
    <reaction evidence="1">
        <text>L-aspartate 4-semialdehyde + pyruvate = (2S,4S)-4-hydroxy-2,3,4,5-tetrahydrodipicolinate + H2O + H(+)</text>
        <dbReference type="Rhea" id="RHEA:34171"/>
        <dbReference type="ChEBI" id="CHEBI:15361"/>
        <dbReference type="ChEBI" id="CHEBI:15377"/>
        <dbReference type="ChEBI" id="CHEBI:15378"/>
        <dbReference type="ChEBI" id="CHEBI:67139"/>
        <dbReference type="ChEBI" id="CHEBI:537519"/>
        <dbReference type="EC" id="4.3.3.7"/>
    </reaction>
</comment>
<comment type="pathway">
    <text evidence="1">Amino-acid biosynthesis; L-lysine biosynthesis via DAP pathway; (S)-tetrahydrodipicolinate from L-aspartate: step 3/4.</text>
</comment>
<comment type="subunit">
    <text evidence="1">Homotetramer; dimer of dimers.</text>
</comment>
<comment type="subcellular location">
    <subcellularLocation>
        <location evidence="1">Cytoplasm</location>
    </subcellularLocation>
</comment>
<comment type="similarity">
    <text evidence="1">Belongs to the DapA family.</text>
</comment>
<comment type="caution">
    <text evidence="2">Was originally thought to be a dihydrodipicolinate synthase (DHDPS), catalyzing the condensation of (S)-aspartate-beta-semialdehyde [(S)-ASA] and pyruvate to dihydrodipicolinate (DHDP). However, it was shown in E.coli that the product of the enzymatic reaction is not dihydrodipicolinate but in fact (4S)-4-hydroxy-2,3,4,5-tetrahydro-(2S)-dipicolinic acid (HTPA), and that the consecutive dehydration reaction leading to DHDP is not spontaneous but catalyzed by DapB.</text>
</comment>
<sequence length="291" mass="32118">MFKGSMVAIVTPFKKGKIDEKAFEKLIEWHIKEGTHGIVPCGTTGEASTLDYEEHYKVIEITVKVVNKRIPVIAGTGSNSTDEAIMITKKAEKLGADAALLVTPYYNKPTQEGLYRHYKEIADKTGIPLILYNVPGRTSVNILPQTVARLAEHPRIVGIKEATGDMKQVSELIRLCGDKITVLSGDDFTNLTLLALGGKGAISVTANICPKDMAELFNAWEKGDIEHARKLHYKLEPLNKAMFIETNPIPVKTALAMMGKIKEEFRLPLCEMSQTNKEKLAEVLRSAGLIK</sequence>
<name>DAPA_THEYD</name>
<organism>
    <name type="scientific">Thermodesulfovibrio yellowstonii (strain ATCC 51303 / DSM 11347 / YP87)</name>
    <dbReference type="NCBI Taxonomy" id="289376"/>
    <lineage>
        <taxon>Bacteria</taxon>
        <taxon>Pseudomonadati</taxon>
        <taxon>Nitrospirota</taxon>
        <taxon>Thermodesulfovibrionia</taxon>
        <taxon>Thermodesulfovibrionales</taxon>
        <taxon>Thermodesulfovibrionaceae</taxon>
        <taxon>Thermodesulfovibrio</taxon>
    </lineage>
</organism>
<protein>
    <recommendedName>
        <fullName evidence="1">4-hydroxy-tetrahydrodipicolinate synthase</fullName>
        <shortName evidence="1">HTPA synthase</shortName>
        <ecNumber evidence="1">4.3.3.7</ecNumber>
    </recommendedName>
</protein>
<dbReference type="EC" id="4.3.3.7" evidence="1"/>
<dbReference type="EMBL" id="CP001147">
    <property type="protein sequence ID" value="ACI20398.1"/>
    <property type="molecule type" value="Genomic_DNA"/>
</dbReference>
<dbReference type="RefSeq" id="WP_012545135.1">
    <property type="nucleotide sequence ID" value="NC_011296.1"/>
</dbReference>
<dbReference type="RefSeq" id="YP_002248769.1">
    <property type="nucleotide sequence ID" value="NC_011296.1"/>
</dbReference>
<dbReference type="SMR" id="B5YKK4"/>
<dbReference type="FunCoup" id="B5YKK4">
    <property type="interactions" value="422"/>
</dbReference>
<dbReference type="STRING" id="289376.THEYE_A0933"/>
<dbReference type="EnsemblBacteria" id="ACI20398">
    <property type="protein sequence ID" value="ACI20398"/>
    <property type="gene ID" value="THEYE_A0933"/>
</dbReference>
<dbReference type="KEGG" id="tye:THEYE_A0933"/>
<dbReference type="PATRIC" id="fig|289376.4.peg.919"/>
<dbReference type="eggNOG" id="COG0329">
    <property type="taxonomic scope" value="Bacteria"/>
</dbReference>
<dbReference type="HOGENOM" id="CLU_049343_7_1_0"/>
<dbReference type="InParanoid" id="B5YKK4"/>
<dbReference type="OrthoDB" id="9782828at2"/>
<dbReference type="UniPathway" id="UPA00034">
    <property type="reaction ID" value="UER00017"/>
</dbReference>
<dbReference type="Proteomes" id="UP000000718">
    <property type="component" value="Chromosome"/>
</dbReference>
<dbReference type="GO" id="GO:0005829">
    <property type="term" value="C:cytosol"/>
    <property type="evidence" value="ECO:0000318"/>
    <property type="project" value="GO_Central"/>
</dbReference>
<dbReference type="GO" id="GO:0008840">
    <property type="term" value="F:4-hydroxy-tetrahydrodipicolinate synthase activity"/>
    <property type="evidence" value="ECO:0000318"/>
    <property type="project" value="GO_Central"/>
</dbReference>
<dbReference type="GO" id="GO:0019877">
    <property type="term" value="P:diaminopimelate biosynthetic process"/>
    <property type="evidence" value="ECO:0007669"/>
    <property type="project" value="UniProtKB-UniRule"/>
</dbReference>
<dbReference type="GO" id="GO:0009089">
    <property type="term" value="P:lysine biosynthetic process via diaminopimelate"/>
    <property type="evidence" value="ECO:0007669"/>
    <property type="project" value="UniProtKB-UniRule"/>
</dbReference>
<dbReference type="CDD" id="cd00950">
    <property type="entry name" value="DHDPS"/>
    <property type="match status" value="1"/>
</dbReference>
<dbReference type="Gene3D" id="3.20.20.70">
    <property type="entry name" value="Aldolase class I"/>
    <property type="match status" value="1"/>
</dbReference>
<dbReference type="HAMAP" id="MF_00418">
    <property type="entry name" value="DapA"/>
    <property type="match status" value="1"/>
</dbReference>
<dbReference type="InterPro" id="IPR013785">
    <property type="entry name" value="Aldolase_TIM"/>
</dbReference>
<dbReference type="InterPro" id="IPR005263">
    <property type="entry name" value="DapA"/>
</dbReference>
<dbReference type="InterPro" id="IPR002220">
    <property type="entry name" value="DapA-like"/>
</dbReference>
<dbReference type="InterPro" id="IPR020625">
    <property type="entry name" value="Schiff_base-form_aldolases_AS"/>
</dbReference>
<dbReference type="InterPro" id="IPR020624">
    <property type="entry name" value="Schiff_base-form_aldolases_CS"/>
</dbReference>
<dbReference type="NCBIfam" id="TIGR00674">
    <property type="entry name" value="dapA"/>
    <property type="match status" value="1"/>
</dbReference>
<dbReference type="PANTHER" id="PTHR12128:SF66">
    <property type="entry name" value="4-HYDROXY-2-OXOGLUTARATE ALDOLASE, MITOCHONDRIAL"/>
    <property type="match status" value="1"/>
</dbReference>
<dbReference type="PANTHER" id="PTHR12128">
    <property type="entry name" value="DIHYDRODIPICOLINATE SYNTHASE"/>
    <property type="match status" value="1"/>
</dbReference>
<dbReference type="Pfam" id="PF00701">
    <property type="entry name" value="DHDPS"/>
    <property type="match status" value="1"/>
</dbReference>
<dbReference type="PIRSF" id="PIRSF001365">
    <property type="entry name" value="DHDPS"/>
    <property type="match status" value="1"/>
</dbReference>
<dbReference type="PRINTS" id="PR00146">
    <property type="entry name" value="DHPICSNTHASE"/>
</dbReference>
<dbReference type="SMART" id="SM01130">
    <property type="entry name" value="DHDPS"/>
    <property type="match status" value="1"/>
</dbReference>
<dbReference type="SUPFAM" id="SSF51569">
    <property type="entry name" value="Aldolase"/>
    <property type="match status" value="1"/>
</dbReference>
<dbReference type="PROSITE" id="PS00665">
    <property type="entry name" value="DHDPS_1"/>
    <property type="match status" value="1"/>
</dbReference>
<dbReference type="PROSITE" id="PS00666">
    <property type="entry name" value="DHDPS_2"/>
    <property type="match status" value="1"/>
</dbReference>
<evidence type="ECO:0000255" key="1">
    <source>
        <dbReference type="HAMAP-Rule" id="MF_00418"/>
    </source>
</evidence>
<evidence type="ECO:0000305" key="2"/>
<accession>B5YKK4</accession>
<proteinExistence type="inferred from homology"/>
<gene>
    <name evidence="1" type="primary">dapA</name>
    <name type="ordered locus">THEYE_A0933</name>
</gene>